<feature type="chain" id="PRO_0000283272" description="F-box/kelch-repeat protein At5g42350">
    <location>
        <begin position="1"/>
        <end position="563"/>
    </location>
</feature>
<feature type="domain" description="F-box" evidence="1">
    <location>
        <begin position="129"/>
        <end position="175"/>
    </location>
</feature>
<feature type="repeat" description="Kelch 1">
    <location>
        <begin position="184"/>
        <end position="231"/>
    </location>
</feature>
<feature type="repeat" description="Kelch 2">
    <location>
        <begin position="232"/>
        <end position="282"/>
    </location>
</feature>
<feature type="repeat" description="Kelch 3">
    <location>
        <begin position="355"/>
        <end position="402"/>
    </location>
</feature>
<feature type="sequence conflict" description="In Ref. 3; AAL67108." evidence="2" ref="3">
    <original>L</original>
    <variation>F</variation>
    <location>
        <position position="453"/>
    </location>
</feature>
<accession>Q9FII2</accession>
<accession>Q8VXV3</accession>
<evidence type="ECO:0000255" key="1">
    <source>
        <dbReference type="PROSITE-ProRule" id="PRU00080"/>
    </source>
</evidence>
<evidence type="ECO:0000305" key="2"/>
<keyword id="KW-0880">Kelch repeat</keyword>
<keyword id="KW-1185">Reference proteome</keyword>
<keyword id="KW-0677">Repeat</keyword>
<proteinExistence type="evidence at transcript level"/>
<sequence length="563" mass="64726">MMISEKPLGVEESIRQDLEVLTVSRRLVKSVSQKLKKKIHKTEVVEDEEIARGAVNCLSISVGCRVADTGEDFEDSSNKRWSSASEEGKGLMTICGTEETRLDCFSYGVRERFWKKNNRKYLADSGQDYRKHVYLPDDILEMCLMRLPLTSLLNAHLVCKKWQSMANTQRFLQMRREGSFQTPWLFLFAALKDGCSSGDIHGYDVSQDKWHRIETDLLKGRFMYSVTSIHEEIYIVGGRSMDRNSFKSHRGILVFSPSIKAWRKIASMRHARSLPIVGATEVTSEFSTMQTKQNRQDRRFHLSRVGGESDVYEDPHRLSVRRQNRNSADQNGTKSHRLIRQKLDRLNRNSSKRFVLIAIGGTGLFDEPLDSGEIYDSATNTWSEMQRLPMGFGVVSCGIICNGIFYAYSENDKLSGYDIERGFWITIQTSPIPPRVHEFYPKLVSCNHRLFMLSVSWCDEGDGQIGRRNKAVRKLWELDLVYLTWTEVSVHPDAPMDWNATYVSDQNILMGIEMFKIFGQVLSFFTVCDVLTEEASWRHVSRNQRSQKLNLSCTNKTIALLHL</sequence>
<gene>
    <name type="ordered locus">At5g42350</name>
    <name type="ORF">MDH9.4</name>
</gene>
<protein>
    <recommendedName>
        <fullName>F-box/kelch-repeat protein At5g42350</fullName>
    </recommendedName>
</protein>
<name>FK117_ARATH</name>
<organism>
    <name type="scientific">Arabidopsis thaliana</name>
    <name type="common">Mouse-ear cress</name>
    <dbReference type="NCBI Taxonomy" id="3702"/>
    <lineage>
        <taxon>Eukaryota</taxon>
        <taxon>Viridiplantae</taxon>
        <taxon>Streptophyta</taxon>
        <taxon>Embryophyta</taxon>
        <taxon>Tracheophyta</taxon>
        <taxon>Spermatophyta</taxon>
        <taxon>Magnoliopsida</taxon>
        <taxon>eudicotyledons</taxon>
        <taxon>Gunneridae</taxon>
        <taxon>Pentapetalae</taxon>
        <taxon>rosids</taxon>
        <taxon>malvids</taxon>
        <taxon>Brassicales</taxon>
        <taxon>Brassicaceae</taxon>
        <taxon>Camelineae</taxon>
        <taxon>Arabidopsis</taxon>
    </lineage>
</organism>
<dbReference type="EMBL" id="AB016888">
    <property type="protein sequence ID" value="BAB10476.1"/>
    <property type="molecule type" value="Genomic_DNA"/>
</dbReference>
<dbReference type="EMBL" id="CP002688">
    <property type="protein sequence ID" value="AED94799.1"/>
    <property type="molecule type" value="Genomic_DNA"/>
</dbReference>
<dbReference type="EMBL" id="AY074568">
    <property type="protein sequence ID" value="AAL67108.1"/>
    <property type="molecule type" value="mRNA"/>
</dbReference>
<dbReference type="EMBL" id="AF436832">
    <property type="protein sequence ID" value="AAL32014.1"/>
    <property type="molecule type" value="mRNA"/>
</dbReference>
<dbReference type="EMBL" id="BT010181">
    <property type="protein sequence ID" value="AAQ22650.1"/>
    <property type="molecule type" value="mRNA"/>
</dbReference>
<dbReference type="RefSeq" id="NP_199050.1">
    <property type="nucleotide sequence ID" value="NM_123600.3"/>
</dbReference>
<dbReference type="SMR" id="Q9FII2"/>
<dbReference type="BioGRID" id="19491">
    <property type="interactions" value="4"/>
</dbReference>
<dbReference type="FunCoup" id="Q9FII2">
    <property type="interactions" value="719"/>
</dbReference>
<dbReference type="STRING" id="3702.Q9FII2"/>
<dbReference type="PaxDb" id="3702-AT5G42350.1"/>
<dbReference type="ProteomicsDB" id="232085"/>
<dbReference type="EnsemblPlants" id="AT5G42350.1">
    <property type="protein sequence ID" value="AT5G42350.1"/>
    <property type="gene ID" value="AT5G42350"/>
</dbReference>
<dbReference type="GeneID" id="834241"/>
<dbReference type="Gramene" id="AT5G42350.1">
    <property type="protein sequence ID" value="AT5G42350.1"/>
    <property type="gene ID" value="AT5G42350"/>
</dbReference>
<dbReference type="KEGG" id="ath:AT5G42350"/>
<dbReference type="Araport" id="AT5G42350"/>
<dbReference type="TAIR" id="AT5G42350">
    <property type="gene designation" value="CFK1"/>
</dbReference>
<dbReference type="eggNOG" id="ENOG502QQKY">
    <property type="taxonomic scope" value="Eukaryota"/>
</dbReference>
<dbReference type="HOGENOM" id="CLU_033597_0_0_1"/>
<dbReference type="InParanoid" id="Q9FII2"/>
<dbReference type="OMA" id="SWCERDG"/>
<dbReference type="PhylomeDB" id="Q9FII2"/>
<dbReference type="PRO" id="PR:Q9FII2"/>
<dbReference type="Proteomes" id="UP000006548">
    <property type="component" value="Chromosome 5"/>
</dbReference>
<dbReference type="ExpressionAtlas" id="Q9FII2">
    <property type="expression patterns" value="baseline and differential"/>
</dbReference>
<dbReference type="GO" id="GO:0019005">
    <property type="term" value="C:SCF ubiquitin ligase complex"/>
    <property type="evidence" value="ECO:0000353"/>
    <property type="project" value="TAIR"/>
</dbReference>
<dbReference type="GO" id="GO:0001558">
    <property type="term" value="P:regulation of cell growth"/>
    <property type="evidence" value="ECO:0000315"/>
    <property type="project" value="TAIR"/>
</dbReference>
<dbReference type="GO" id="GO:0008361">
    <property type="term" value="P:regulation of cell size"/>
    <property type="evidence" value="ECO:0000315"/>
    <property type="project" value="TAIR"/>
</dbReference>
<dbReference type="FunFam" id="1.20.1280.50:FF:000151">
    <property type="entry name" value="F-box/kelch-repeat protein At5g42360"/>
    <property type="match status" value="1"/>
</dbReference>
<dbReference type="FunFam" id="2.120.10.80:FF:000103">
    <property type="entry name" value="F-box/kelch-repeat protein At5g42360"/>
    <property type="match status" value="1"/>
</dbReference>
<dbReference type="FunFam" id="2.120.10.80:FF:000174">
    <property type="entry name" value="F-box/kelch-repeat protein At5g42360"/>
    <property type="match status" value="1"/>
</dbReference>
<dbReference type="Gene3D" id="1.20.1280.50">
    <property type="match status" value="1"/>
</dbReference>
<dbReference type="Gene3D" id="2.120.10.80">
    <property type="entry name" value="Kelch-type beta propeller"/>
    <property type="match status" value="2"/>
</dbReference>
<dbReference type="InterPro" id="IPR036047">
    <property type="entry name" value="F-box-like_dom_sf"/>
</dbReference>
<dbReference type="InterPro" id="IPR001810">
    <property type="entry name" value="F-box_dom"/>
</dbReference>
<dbReference type="InterPro" id="IPR015915">
    <property type="entry name" value="Kelch-typ_b-propeller"/>
</dbReference>
<dbReference type="InterPro" id="IPR006652">
    <property type="entry name" value="Kelch_1"/>
</dbReference>
<dbReference type="PANTHER" id="PTHR47712">
    <property type="entry name" value="OS09G0555300 PROTEIN"/>
    <property type="match status" value="1"/>
</dbReference>
<dbReference type="PANTHER" id="PTHR47712:SF1">
    <property type="entry name" value="OS09G0555300 PROTEIN"/>
    <property type="match status" value="1"/>
</dbReference>
<dbReference type="Pfam" id="PF00646">
    <property type="entry name" value="F-box"/>
    <property type="match status" value="1"/>
</dbReference>
<dbReference type="Pfam" id="PF13964">
    <property type="entry name" value="Kelch_6"/>
    <property type="match status" value="1"/>
</dbReference>
<dbReference type="SMART" id="SM00256">
    <property type="entry name" value="FBOX"/>
    <property type="match status" value="1"/>
</dbReference>
<dbReference type="SMART" id="SM00612">
    <property type="entry name" value="Kelch"/>
    <property type="match status" value="2"/>
</dbReference>
<dbReference type="SUPFAM" id="SSF81383">
    <property type="entry name" value="F-box domain"/>
    <property type="match status" value="1"/>
</dbReference>
<dbReference type="SUPFAM" id="SSF117281">
    <property type="entry name" value="Kelch motif"/>
    <property type="match status" value="1"/>
</dbReference>
<dbReference type="PROSITE" id="PS50181">
    <property type="entry name" value="FBOX"/>
    <property type="match status" value="1"/>
</dbReference>
<reference key="1">
    <citation type="journal article" date="1998" name="DNA Res.">
        <title>Structural analysis of Arabidopsis thaliana chromosome 5. VIII. Sequence features of the regions of 1,081,958 bp covered by seventeen physically assigned P1 and TAC clones.</title>
        <authorList>
            <person name="Asamizu E."/>
            <person name="Sato S."/>
            <person name="Kaneko T."/>
            <person name="Nakamura Y."/>
            <person name="Kotani H."/>
            <person name="Miyajima N."/>
            <person name="Tabata S."/>
        </authorList>
    </citation>
    <scope>NUCLEOTIDE SEQUENCE [LARGE SCALE GENOMIC DNA]</scope>
    <source>
        <strain>cv. Columbia</strain>
    </source>
</reference>
<reference key="2">
    <citation type="journal article" date="2017" name="Plant J.">
        <title>Araport11: a complete reannotation of the Arabidopsis thaliana reference genome.</title>
        <authorList>
            <person name="Cheng C.Y."/>
            <person name="Krishnakumar V."/>
            <person name="Chan A.P."/>
            <person name="Thibaud-Nissen F."/>
            <person name="Schobel S."/>
            <person name="Town C.D."/>
        </authorList>
    </citation>
    <scope>GENOME REANNOTATION</scope>
    <source>
        <strain>cv. Columbia</strain>
    </source>
</reference>
<reference key="3">
    <citation type="journal article" date="2003" name="Science">
        <title>Empirical analysis of transcriptional activity in the Arabidopsis genome.</title>
        <authorList>
            <person name="Yamada K."/>
            <person name="Lim J."/>
            <person name="Dale J.M."/>
            <person name="Chen H."/>
            <person name="Shinn P."/>
            <person name="Palm C.J."/>
            <person name="Southwick A.M."/>
            <person name="Wu H.C."/>
            <person name="Kim C.J."/>
            <person name="Nguyen M."/>
            <person name="Pham P.K."/>
            <person name="Cheuk R.F."/>
            <person name="Karlin-Newmann G."/>
            <person name="Liu S.X."/>
            <person name="Lam B."/>
            <person name="Sakano H."/>
            <person name="Wu T."/>
            <person name="Yu G."/>
            <person name="Miranda M."/>
            <person name="Quach H.L."/>
            <person name="Tripp M."/>
            <person name="Chang C.H."/>
            <person name="Lee J.M."/>
            <person name="Toriumi M.J."/>
            <person name="Chan M.M."/>
            <person name="Tang C.C."/>
            <person name="Onodera C.S."/>
            <person name="Deng J.M."/>
            <person name="Akiyama K."/>
            <person name="Ansari Y."/>
            <person name="Arakawa T."/>
            <person name="Banh J."/>
            <person name="Banno F."/>
            <person name="Bowser L."/>
            <person name="Brooks S.Y."/>
            <person name="Carninci P."/>
            <person name="Chao Q."/>
            <person name="Choy N."/>
            <person name="Enju A."/>
            <person name="Goldsmith A.D."/>
            <person name="Gurjal M."/>
            <person name="Hansen N.F."/>
            <person name="Hayashizaki Y."/>
            <person name="Johnson-Hopson C."/>
            <person name="Hsuan V.W."/>
            <person name="Iida K."/>
            <person name="Karnes M."/>
            <person name="Khan S."/>
            <person name="Koesema E."/>
            <person name="Ishida J."/>
            <person name="Jiang P.X."/>
            <person name="Jones T."/>
            <person name="Kawai J."/>
            <person name="Kamiya A."/>
            <person name="Meyers C."/>
            <person name="Nakajima M."/>
            <person name="Narusaka M."/>
            <person name="Seki M."/>
            <person name="Sakurai T."/>
            <person name="Satou M."/>
            <person name="Tamse R."/>
            <person name="Vaysberg M."/>
            <person name="Wallender E.K."/>
            <person name="Wong C."/>
            <person name="Yamamura Y."/>
            <person name="Yuan S."/>
            <person name="Shinozaki K."/>
            <person name="Davis R.W."/>
            <person name="Theologis A."/>
            <person name="Ecker J.R."/>
        </authorList>
    </citation>
    <scope>NUCLEOTIDE SEQUENCE [LARGE SCALE MRNA]</scope>
    <source>
        <strain>cv. Columbia</strain>
    </source>
</reference>